<reference key="1">
    <citation type="journal article" date="2001" name="Nature">
        <title>Complete genome sequence of a multiple drug resistant Salmonella enterica serovar Typhi CT18.</title>
        <authorList>
            <person name="Parkhill J."/>
            <person name="Dougan G."/>
            <person name="James K.D."/>
            <person name="Thomson N.R."/>
            <person name="Pickard D."/>
            <person name="Wain J."/>
            <person name="Churcher C.M."/>
            <person name="Mungall K.L."/>
            <person name="Bentley S.D."/>
            <person name="Holden M.T.G."/>
            <person name="Sebaihia M."/>
            <person name="Baker S."/>
            <person name="Basham D."/>
            <person name="Brooks K."/>
            <person name="Chillingworth T."/>
            <person name="Connerton P."/>
            <person name="Cronin A."/>
            <person name="Davis P."/>
            <person name="Davies R.M."/>
            <person name="Dowd L."/>
            <person name="White N."/>
            <person name="Farrar J."/>
            <person name="Feltwell T."/>
            <person name="Hamlin N."/>
            <person name="Haque A."/>
            <person name="Hien T.T."/>
            <person name="Holroyd S."/>
            <person name="Jagels K."/>
            <person name="Krogh A."/>
            <person name="Larsen T.S."/>
            <person name="Leather S."/>
            <person name="Moule S."/>
            <person name="O'Gaora P."/>
            <person name="Parry C."/>
            <person name="Quail M.A."/>
            <person name="Rutherford K.M."/>
            <person name="Simmonds M."/>
            <person name="Skelton J."/>
            <person name="Stevens K."/>
            <person name="Whitehead S."/>
            <person name="Barrell B.G."/>
        </authorList>
    </citation>
    <scope>NUCLEOTIDE SEQUENCE [LARGE SCALE GENOMIC DNA]</scope>
    <source>
        <strain>CT18</strain>
    </source>
</reference>
<reference key="2">
    <citation type="journal article" date="2003" name="J. Bacteriol.">
        <title>Comparative genomics of Salmonella enterica serovar Typhi strains Ty2 and CT18.</title>
        <authorList>
            <person name="Deng W."/>
            <person name="Liou S.-R."/>
            <person name="Plunkett G. III"/>
            <person name="Mayhew G.F."/>
            <person name="Rose D.J."/>
            <person name="Burland V."/>
            <person name="Kodoyianni V."/>
            <person name="Schwartz D.C."/>
            <person name="Blattner F.R."/>
        </authorList>
    </citation>
    <scope>NUCLEOTIDE SEQUENCE [LARGE SCALE GENOMIC DNA]</scope>
    <source>
        <strain>ATCC 700931 / Ty2</strain>
    </source>
</reference>
<proteinExistence type="inferred from homology"/>
<keyword id="KW-0235">DNA replication</keyword>
<keyword id="KW-0255">Endonuclease</keyword>
<keyword id="KW-0378">Hydrolase</keyword>
<keyword id="KW-0540">Nuclease</keyword>
<dbReference type="EC" id="3.1.-.-"/>
<dbReference type="EMBL" id="AL513382">
    <property type="protein sequence ID" value="CAD06756.1"/>
    <property type="molecule type" value="Genomic_DNA"/>
</dbReference>
<dbReference type="EMBL" id="AE014613">
    <property type="protein sequence ID" value="AAO71782.1"/>
    <property type="molecule type" value="Genomic_DNA"/>
</dbReference>
<dbReference type="RefSeq" id="NP_458715.1">
    <property type="nucleotide sequence ID" value="NC_003198.1"/>
</dbReference>
<dbReference type="RefSeq" id="WP_000301194.1">
    <property type="nucleotide sequence ID" value="NZ_PZMG01000016.1"/>
</dbReference>
<dbReference type="STRING" id="220341.gene:17588453"/>
<dbReference type="KEGG" id="stt:t4328"/>
<dbReference type="KEGG" id="sty:STY4635"/>
<dbReference type="PATRIC" id="fig|220341.7.peg.4734"/>
<dbReference type="eggNOG" id="ENOG502Z7TX">
    <property type="taxonomic scope" value="Bacteria"/>
</dbReference>
<dbReference type="HOGENOM" id="CLU_013772_2_0_6"/>
<dbReference type="OMA" id="ENERCQE"/>
<dbReference type="Proteomes" id="UP000000541">
    <property type="component" value="Chromosome"/>
</dbReference>
<dbReference type="Proteomes" id="UP000002670">
    <property type="component" value="Chromosome"/>
</dbReference>
<dbReference type="GO" id="GO:0004519">
    <property type="term" value="F:endonuclease activity"/>
    <property type="evidence" value="ECO:0007669"/>
    <property type="project" value="UniProtKB-KW"/>
</dbReference>
<dbReference type="GO" id="GO:0006260">
    <property type="term" value="P:DNA replication"/>
    <property type="evidence" value="ECO:0007669"/>
    <property type="project" value="UniProtKB-KW"/>
</dbReference>
<dbReference type="InterPro" id="IPR008766">
    <property type="entry name" value="Replication_gene_A-like"/>
</dbReference>
<dbReference type="Pfam" id="PF05840">
    <property type="entry name" value="Phage_GPA"/>
    <property type="match status" value="1"/>
</dbReference>
<feature type="chain" id="PRO_0000278167" description="Probable replication endonuclease from prophage-like region 2">
    <location>
        <begin position="1"/>
        <end position="804"/>
    </location>
</feature>
<feature type="active site" description="O-(5'-phospho-DNA)-tyrosine intermediate" evidence="1">
    <location>
        <position position="503"/>
    </location>
</feature>
<feature type="active site" description="O-(5'-phospho-DNA)-tyrosine intermediate" evidence="1">
    <location>
        <position position="507"/>
    </location>
</feature>
<feature type="sequence conflict" description="In Ref. 2; AAO71782." evidence="2" ref="2">
    <location>
        <begin position="685"/>
        <end position="686"/>
    </location>
</feature>
<sequence length="804" mass="92043">MAVSKITLHYAQTTGGSNEAAAAFPWNTPKKAVNPYLDPAEFAPESALSNLIALYAVDNEQEQLRRETLSDEVWERYFFNESRDPVQREMEQDRLINHAKTAREQQRFNPDLVIIANVGAQPAHISKPLLERIKYFHSLGRAKAYSRYLQKTIRPCLERLERVRDSQVSASFRFMASHDGLEGLLVLPEMNQDQVKRLSTLVAAHMSMCLDAACGDLFVSDDVKPEEIRQAWERVAAEAMRLEVIPPAFEQLRRKKRRRKPVPYELIPPSLARMLCADWWYRKLWQMRCEWREEQLRAVCLVNKKASPYVSYEAVIHKREQRRKSLEFFRSHELINEDGDTLDMEDVVNASNSNPAHRRNEMMACVKGLELIAEMRGDCAVFYTITCPSRFHATLNNGRPNPKWTSATVRQSSDYLVDTFAAFRKAMHKAGLRWYGVRVAEPHHDGTVHWHLLCFMRKKDRRSITALLRKFAIREDREELGANTGPRFKPELINPRKGTPTSYIAKYISKNIDGRGLAKEISKETGRSLRDSAEHVSAWASLHRVQQFRFFGIPGRQAYRELRLLAGQAARVQGERKAGAPVLDNPRLDAVLAAADAGCFATYIMKQGGVLVPRKHHLVRTAYELNDEPSAYGDHGIRIYGIWSPIAEGKICTHAVKWKKVRKAVDVQEAAADQGACAPWTRTRTRGNNCPPVENLNKSGGDLPDIKTMNEKELQDYLHNMGQKERRELTARLRLVKPKRKTVYKQNISEQQRLQLEAELTARGFEGSASEIDLLLRGGSIPSGAGLRIFYRNHRLQEDDKWRQ</sequence>
<gene>
    <name type="ordered locus">STY4635</name>
    <name type="ordered locus">t4328</name>
</gene>
<organism>
    <name type="scientific">Salmonella typhi</name>
    <dbReference type="NCBI Taxonomy" id="90370"/>
    <lineage>
        <taxon>Bacteria</taxon>
        <taxon>Pseudomonadati</taxon>
        <taxon>Pseudomonadota</taxon>
        <taxon>Gammaproteobacteria</taxon>
        <taxon>Enterobacterales</taxon>
        <taxon>Enterobacteriaceae</taxon>
        <taxon>Salmonella</taxon>
    </lineage>
</organism>
<comment type="function">
    <text evidence="2">Possible endonuclease which induces a single-strand cut and initiates DNA replication.</text>
</comment>
<comment type="similarity">
    <text evidence="2">Belongs to the phage GPA family.</text>
</comment>
<evidence type="ECO:0000250" key="1"/>
<evidence type="ECO:0000305" key="2"/>
<accession>Q8Z1E1</accession>
<accession>Q83SS6</accession>
<name>ENDP2_SALTI</name>
<protein>
    <recommendedName>
        <fullName>Probable replication endonuclease from prophage-like region 2</fullName>
        <ecNumber>3.1.-.-</ecNumber>
    </recommendedName>
</protein>